<proteinExistence type="evidence at transcript level"/>
<accession>P38621</accession>
<dbReference type="EMBL" id="Z22756">
    <property type="protein sequence ID" value="CAA80438.1"/>
    <property type="molecule type" value="mRNA"/>
</dbReference>
<dbReference type="PIR" id="S34140">
    <property type="entry name" value="S34140"/>
</dbReference>
<dbReference type="PIR" id="S37690">
    <property type="entry name" value="S37690"/>
</dbReference>
<dbReference type="SMR" id="P38621"/>
<dbReference type="GO" id="GO:0005634">
    <property type="term" value="C:nucleus"/>
    <property type="evidence" value="ECO:0007669"/>
    <property type="project" value="UniProtKB-SubCell"/>
</dbReference>
<dbReference type="GO" id="GO:0003700">
    <property type="term" value="F:DNA-binding transcription factor activity"/>
    <property type="evidence" value="ECO:0007669"/>
    <property type="project" value="TreeGrafter"/>
</dbReference>
<dbReference type="GO" id="GO:0000978">
    <property type="term" value="F:RNA polymerase II cis-regulatory region sequence-specific DNA binding"/>
    <property type="evidence" value="ECO:0007669"/>
    <property type="project" value="TreeGrafter"/>
</dbReference>
<dbReference type="GO" id="GO:0008270">
    <property type="term" value="F:zinc ion binding"/>
    <property type="evidence" value="ECO:0007669"/>
    <property type="project" value="UniProtKB-KW"/>
</dbReference>
<dbReference type="GO" id="GO:0006357">
    <property type="term" value="P:regulation of transcription by RNA polymerase II"/>
    <property type="evidence" value="ECO:0007669"/>
    <property type="project" value="TreeGrafter"/>
</dbReference>
<dbReference type="FunFam" id="3.30.160.60:FF:000104">
    <property type="entry name" value="Transcriptional repressor protein YY1"/>
    <property type="match status" value="1"/>
</dbReference>
<dbReference type="FunFam" id="3.30.160.60:FF:000100">
    <property type="entry name" value="Zinc finger 45-like"/>
    <property type="match status" value="1"/>
</dbReference>
<dbReference type="FunFam" id="3.30.160.60:FF:000358">
    <property type="entry name" value="zinc finger protein 24"/>
    <property type="match status" value="1"/>
</dbReference>
<dbReference type="FunFam" id="3.30.160.60:FF:001009">
    <property type="entry name" value="Zinc finger protein 26"/>
    <property type="match status" value="1"/>
</dbReference>
<dbReference type="FunFam" id="3.30.160.60:FF:001532">
    <property type="entry name" value="Zinc finger protein 483"/>
    <property type="match status" value="1"/>
</dbReference>
<dbReference type="FunFam" id="3.30.160.60:FF:000384">
    <property type="entry name" value="Zinc finger protein 550"/>
    <property type="match status" value="1"/>
</dbReference>
<dbReference type="FunFam" id="3.30.160.60:FF:000912">
    <property type="entry name" value="Zinc finger protein 660"/>
    <property type="match status" value="1"/>
</dbReference>
<dbReference type="FunFam" id="3.30.160.60:FF:001450">
    <property type="entry name" value="zinc finger protein 774"/>
    <property type="match status" value="1"/>
</dbReference>
<dbReference type="Gene3D" id="3.30.160.60">
    <property type="entry name" value="Classic Zinc Finger"/>
    <property type="match status" value="10"/>
</dbReference>
<dbReference type="InterPro" id="IPR050589">
    <property type="entry name" value="Ikaros_C2H2-ZF"/>
</dbReference>
<dbReference type="InterPro" id="IPR036236">
    <property type="entry name" value="Znf_C2H2_sf"/>
</dbReference>
<dbReference type="InterPro" id="IPR013087">
    <property type="entry name" value="Znf_C2H2_type"/>
</dbReference>
<dbReference type="PANTHER" id="PTHR24404:SF114">
    <property type="entry name" value="KLUMPFUSS, ISOFORM B-RELATED"/>
    <property type="match status" value="1"/>
</dbReference>
<dbReference type="PANTHER" id="PTHR24404">
    <property type="entry name" value="ZINC FINGER PROTEIN"/>
    <property type="match status" value="1"/>
</dbReference>
<dbReference type="Pfam" id="PF00096">
    <property type="entry name" value="zf-C2H2"/>
    <property type="match status" value="10"/>
</dbReference>
<dbReference type="SMART" id="SM00355">
    <property type="entry name" value="ZnF_C2H2"/>
    <property type="match status" value="12"/>
</dbReference>
<dbReference type="SUPFAM" id="SSF57667">
    <property type="entry name" value="beta-beta-alpha zinc fingers"/>
    <property type="match status" value="7"/>
</dbReference>
<dbReference type="PROSITE" id="PS00028">
    <property type="entry name" value="ZINC_FINGER_C2H2_1"/>
    <property type="match status" value="11"/>
</dbReference>
<dbReference type="PROSITE" id="PS50157">
    <property type="entry name" value="ZINC_FINGER_C2H2_2"/>
    <property type="match status" value="12"/>
</dbReference>
<evidence type="ECO:0000255" key="1">
    <source>
        <dbReference type="PROSITE-ProRule" id="PRU00042"/>
    </source>
</evidence>
<evidence type="ECO:0000256" key="2">
    <source>
        <dbReference type="SAM" id="MobiDB-lite"/>
    </source>
</evidence>
<evidence type="ECO:0000305" key="3"/>
<feature type="chain" id="PRO_0000047824" description="Zinc finger protein ZFMSA12A">
    <location>
        <begin position="1"/>
        <end position="415"/>
    </location>
</feature>
<feature type="zinc finger region" description="C2H2-type 1" evidence="1">
    <location>
        <begin position="78"/>
        <end position="100"/>
    </location>
</feature>
<feature type="zinc finger region" description="C2H2-type 2" evidence="1">
    <location>
        <begin position="106"/>
        <end position="129"/>
    </location>
</feature>
<feature type="zinc finger region" description="C2H2-type 3" evidence="1">
    <location>
        <begin position="134"/>
        <end position="156"/>
    </location>
</feature>
<feature type="zinc finger region" description="C2H2-type 4" evidence="1">
    <location>
        <begin position="161"/>
        <end position="183"/>
    </location>
</feature>
<feature type="zinc finger region" description="C2H2-type 5" evidence="1">
    <location>
        <begin position="189"/>
        <end position="211"/>
    </location>
</feature>
<feature type="zinc finger region" description="C2H2-type 6" evidence="1">
    <location>
        <begin position="217"/>
        <end position="239"/>
    </location>
</feature>
<feature type="zinc finger region" description="C2H2-type 7" evidence="1">
    <location>
        <begin position="245"/>
        <end position="267"/>
    </location>
</feature>
<feature type="zinc finger region" description="C2H2-type 8" evidence="1">
    <location>
        <begin position="273"/>
        <end position="295"/>
    </location>
</feature>
<feature type="zinc finger region" description="C2H2-type 9" evidence="1">
    <location>
        <begin position="301"/>
        <end position="323"/>
    </location>
</feature>
<feature type="zinc finger region" description="C2H2-type 10" evidence="1">
    <location>
        <begin position="329"/>
        <end position="351"/>
    </location>
</feature>
<feature type="zinc finger region" description="C2H2-type 11" evidence="1">
    <location>
        <begin position="357"/>
        <end position="379"/>
    </location>
</feature>
<feature type="zinc finger region" description="C2H2-type 12" evidence="1">
    <location>
        <begin position="385"/>
        <end position="407"/>
    </location>
</feature>
<feature type="region of interest" description="Disordered" evidence="2">
    <location>
        <begin position="1"/>
        <end position="36"/>
    </location>
</feature>
<name>ZN12_MICSA</name>
<organism>
    <name type="scientific">Micropterus salmoides</name>
    <name type="common">Largemouth bass</name>
    <name type="synonym">Labrus salmoides</name>
    <dbReference type="NCBI Taxonomy" id="27706"/>
    <lineage>
        <taxon>Eukaryota</taxon>
        <taxon>Metazoa</taxon>
        <taxon>Chordata</taxon>
        <taxon>Craniata</taxon>
        <taxon>Vertebrata</taxon>
        <taxon>Euteleostomi</taxon>
        <taxon>Actinopterygii</taxon>
        <taxon>Neopterygii</taxon>
        <taxon>Teleostei</taxon>
        <taxon>Neoteleostei</taxon>
        <taxon>Acanthomorphata</taxon>
        <taxon>Eupercaria</taxon>
        <taxon>Centrarchiformes</taxon>
        <taxon>Centrarchoidei</taxon>
        <taxon>Centrarchidae</taxon>
        <taxon>Micropterus</taxon>
    </lineage>
</organism>
<reference key="1">
    <citation type="journal article" date="1993" name="Nucleic Acids Res.">
        <title>Sequence divergence of a TFIIIA-type zinc finger protein from fish ovarian tissue.</title>
        <authorList>
            <person name="Ogilvie M.K."/>
            <person name="Smith J.F."/>
            <person name="Hanas J.S."/>
        </authorList>
    </citation>
    <scope>NUCLEOTIDE SEQUENCE [MRNA]</scope>
    <source>
        <tissue>Ovary</tissue>
    </source>
</reference>
<keyword id="KW-0238">DNA-binding</keyword>
<keyword id="KW-0479">Metal-binding</keyword>
<keyword id="KW-0539">Nucleus</keyword>
<keyword id="KW-0677">Repeat</keyword>
<keyword id="KW-0862">Zinc</keyword>
<keyword id="KW-0863">Zinc-finger</keyword>
<sequence>MGIQDARWPSEDEETHLLDSSSAEQTRGEKCSDSTPDVHIVEEYEDRAPATCQAPSTSTDTPVLSSSMICPPRQRVAHKCTQCGKCFIYRYELLEHQRLHTGENPYRCSQCGKAFRRTSDLSSHRRTQCIKAAYICIKCGNSFQSIQEKFRHQCVHSVQKFDCSQCGKSFKKMHLLGKHELTHTQNRIFTCRQCGKVYPGMSELRSHQKIHPPELSNQCMQCGKFFSSSACLTAHEVRHRQQRTQICARCGKAFKNKHDLNLHMRSHTGERPFQCTYCGKRFSVSGNLNIHVRTHTGEKPYLCSDCGKAFISAGELQIHRRTHTGEKPYKCSVCGRGFTMASKVTLHMRVHTGERPYVCSECGKGFSRGSELKKHSMNHTGVRPYACQLCAKTYTCLNHLKRHLKTHSVIQNQSV</sequence>
<protein>
    <recommendedName>
        <fullName>Zinc finger protein ZFMSA12A</fullName>
    </recommendedName>
</protein>
<comment type="subcellular location">
    <subcellularLocation>
        <location evidence="3">Nucleus</location>
    </subcellularLocation>
</comment>